<dbReference type="EC" id="2.1.3.15" evidence="1"/>
<dbReference type="EMBL" id="CP000730">
    <property type="protein sequence ID" value="ABX29693.1"/>
    <property type="molecule type" value="Genomic_DNA"/>
</dbReference>
<dbReference type="RefSeq" id="WP_000883645.1">
    <property type="nucleotide sequence ID" value="NC_010079.1"/>
</dbReference>
<dbReference type="SMR" id="A8Z2L5"/>
<dbReference type="KEGG" id="sax:USA300HOU_1686"/>
<dbReference type="HOGENOM" id="CLU_015486_0_2_9"/>
<dbReference type="UniPathway" id="UPA00655">
    <property type="reaction ID" value="UER00711"/>
</dbReference>
<dbReference type="GO" id="GO:0009317">
    <property type="term" value="C:acetyl-CoA carboxylase complex"/>
    <property type="evidence" value="ECO:0007669"/>
    <property type="project" value="InterPro"/>
</dbReference>
<dbReference type="GO" id="GO:0003989">
    <property type="term" value="F:acetyl-CoA carboxylase activity"/>
    <property type="evidence" value="ECO:0007669"/>
    <property type="project" value="InterPro"/>
</dbReference>
<dbReference type="GO" id="GO:0005524">
    <property type="term" value="F:ATP binding"/>
    <property type="evidence" value="ECO:0007669"/>
    <property type="project" value="UniProtKB-KW"/>
</dbReference>
<dbReference type="GO" id="GO:0016743">
    <property type="term" value="F:carboxyl- or carbamoyltransferase activity"/>
    <property type="evidence" value="ECO:0007669"/>
    <property type="project" value="UniProtKB-UniRule"/>
</dbReference>
<dbReference type="GO" id="GO:0006633">
    <property type="term" value="P:fatty acid biosynthetic process"/>
    <property type="evidence" value="ECO:0007669"/>
    <property type="project" value="UniProtKB-KW"/>
</dbReference>
<dbReference type="GO" id="GO:2001295">
    <property type="term" value="P:malonyl-CoA biosynthetic process"/>
    <property type="evidence" value="ECO:0007669"/>
    <property type="project" value="UniProtKB-UniRule"/>
</dbReference>
<dbReference type="Gene3D" id="3.90.226.10">
    <property type="entry name" value="2-enoyl-CoA Hydratase, Chain A, domain 1"/>
    <property type="match status" value="1"/>
</dbReference>
<dbReference type="HAMAP" id="MF_00823">
    <property type="entry name" value="AcetylCoA_CT_alpha"/>
    <property type="match status" value="1"/>
</dbReference>
<dbReference type="InterPro" id="IPR001095">
    <property type="entry name" value="Acetyl_CoA_COase_a_su"/>
</dbReference>
<dbReference type="InterPro" id="IPR029045">
    <property type="entry name" value="ClpP/crotonase-like_dom_sf"/>
</dbReference>
<dbReference type="InterPro" id="IPR011763">
    <property type="entry name" value="COA_CT_C"/>
</dbReference>
<dbReference type="NCBIfam" id="TIGR00513">
    <property type="entry name" value="accA"/>
    <property type="match status" value="1"/>
</dbReference>
<dbReference type="NCBIfam" id="NF041504">
    <property type="entry name" value="AccA_sub"/>
    <property type="match status" value="1"/>
</dbReference>
<dbReference type="NCBIfam" id="NF004344">
    <property type="entry name" value="PRK05724.1"/>
    <property type="match status" value="1"/>
</dbReference>
<dbReference type="PANTHER" id="PTHR42853">
    <property type="entry name" value="ACETYL-COENZYME A CARBOXYLASE CARBOXYL TRANSFERASE SUBUNIT ALPHA"/>
    <property type="match status" value="1"/>
</dbReference>
<dbReference type="PANTHER" id="PTHR42853:SF3">
    <property type="entry name" value="ACETYL-COENZYME A CARBOXYLASE CARBOXYL TRANSFERASE SUBUNIT ALPHA, CHLOROPLASTIC"/>
    <property type="match status" value="1"/>
</dbReference>
<dbReference type="Pfam" id="PF03255">
    <property type="entry name" value="ACCA"/>
    <property type="match status" value="1"/>
</dbReference>
<dbReference type="PRINTS" id="PR01069">
    <property type="entry name" value="ACCCTRFRASEA"/>
</dbReference>
<dbReference type="SUPFAM" id="SSF52096">
    <property type="entry name" value="ClpP/crotonase"/>
    <property type="match status" value="1"/>
</dbReference>
<dbReference type="PROSITE" id="PS50989">
    <property type="entry name" value="COA_CT_CTER"/>
    <property type="match status" value="1"/>
</dbReference>
<proteinExistence type="inferred from homology"/>
<reference key="1">
    <citation type="journal article" date="2007" name="BMC Microbiol.">
        <title>Subtle genetic changes enhance virulence of methicillin resistant and sensitive Staphylococcus aureus.</title>
        <authorList>
            <person name="Highlander S.K."/>
            <person name="Hulten K.G."/>
            <person name="Qin X."/>
            <person name="Jiang H."/>
            <person name="Yerrapragada S."/>
            <person name="Mason E.O. Jr."/>
            <person name="Shang Y."/>
            <person name="Williams T.M."/>
            <person name="Fortunov R.M."/>
            <person name="Liu Y."/>
            <person name="Igboeli O."/>
            <person name="Petrosino J."/>
            <person name="Tirumalai M."/>
            <person name="Uzman A."/>
            <person name="Fox G.E."/>
            <person name="Cardenas A.M."/>
            <person name="Muzny D.M."/>
            <person name="Hemphill L."/>
            <person name="Ding Y."/>
            <person name="Dugan S."/>
            <person name="Blyth P.R."/>
            <person name="Buhay C.J."/>
            <person name="Dinh H.H."/>
            <person name="Hawes A.C."/>
            <person name="Holder M."/>
            <person name="Kovar C.L."/>
            <person name="Lee S.L."/>
            <person name="Liu W."/>
            <person name="Nazareth L.V."/>
            <person name="Wang Q."/>
            <person name="Zhou J."/>
            <person name="Kaplan S.L."/>
            <person name="Weinstock G.M."/>
        </authorList>
    </citation>
    <scope>NUCLEOTIDE SEQUENCE [LARGE SCALE GENOMIC DNA]</scope>
    <source>
        <strain>USA300 / TCH1516</strain>
    </source>
</reference>
<organism>
    <name type="scientific">Staphylococcus aureus (strain USA300 / TCH1516)</name>
    <dbReference type="NCBI Taxonomy" id="451516"/>
    <lineage>
        <taxon>Bacteria</taxon>
        <taxon>Bacillati</taxon>
        <taxon>Bacillota</taxon>
        <taxon>Bacilli</taxon>
        <taxon>Bacillales</taxon>
        <taxon>Staphylococcaceae</taxon>
        <taxon>Staphylococcus</taxon>
    </lineage>
</organism>
<gene>
    <name evidence="1" type="primary">accA</name>
    <name type="ordered locus">USA300HOU_1686</name>
</gene>
<sequence>MLDFEKPLFEIRNKIESLKESQDKNDVDLQEEIDMLEASLERETKKIYTNLKPWDRVQIARLQERPTTLDYIPYIFDSFMELHGDRNFRDDPAMIGGIGFLNGRAVTVIGQQRGKDTKDNIYRNFGMAHPEGYRKALRLMKQAEKFNRPIFTFIDTKGAYPGKAAEERGQSESIATNLIEMASLKVPVIAIVIGEGGSGGALGIGIANKVLMLENSTYSVISPEGAAALLWKDSNLAKIAAETMKITAHDIKQLGIIDDVISEPLGGAHKDIEQQALAIKSAFVAQLDSLESLSRDEIANDRFEKFRNIGSYIE</sequence>
<accession>A8Z2L5</accession>
<comment type="function">
    <text evidence="1">Component of the acetyl coenzyme A carboxylase (ACC) complex. First, biotin carboxylase catalyzes the carboxylation of biotin on its carrier protein (BCCP) and then the CO(2) group is transferred by the carboxyltransferase to acetyl-CoA to form malonyl-CoA.</text>
</comment>
<comment type="catalytic activity">
    <reaction evidence="1">
        <text>N(6)-carboxybiotinyl-L-lysyl-[protein] + acetyl-CoA = N(6)-biotinyl-L-lysyl-[protein] + malonyl-CoA</text>
        <dbReference type="Rhea" id="RHEA:54728"/>
        <dbReference type="Rhea" id="RHEA-COMP:10505"/>
        <dbReference type="Rhea" id="RHEA-COMP:10506"/>
        <dbReference type="ChEBI" id="CHEBI:57288"/>
        <dbReference type="ChEBI" id="CHEBI:57384"/>
        <dbReference type="ChEBI" id="CHEBI:83144"/>
        <dbReference type="ChEBI" id="CHEBI:83145"/>
        <dbReference type="EC" id="2.1.3.15"/>
    </reaction>
</comment>
<comment type="pathway">
    <text evidence="1">Lipid metabolism; malonyl-CoA biosynthesis; malonyl-CoA from acetyl-CoA: step 1/1.</text>
</comment>
<comment type="subunit">
    <text evidence="1">Acetyl-CoA carboxylase is a heterohexamer composed of biotin carboxyl carrier protein (AccB), biotin carboxylase (AccC) and two subunits each of ACCase subunit alpha (AccA) and ACCase subunit beta (AccD).</text>
</comment>
<comment type="subcellular location">
    <subcellularLocation>
        <location evidence="1">Cytoplasm</location>
    </subcellularLocation>
</comment>
<comment type="similarity">
    <text evidence="1">Belongs to the AccA family.</text>
</comment>
<feature type="chain" id="PRO_1000083938" description="Acetyl-coenzyme A carboxylase carboxyl transferase subunit alpha">
    <location>
        <begin position="1"/>
        <end position="314"/>
    </location>
</feature>
<feature type="domain" description="CoA carboxyltransferase C-terminal" evidence="2">
    <location>
        <begin position="32"/>
        <end position="289"/>
    </location>
</feature>
<keyword id="KW-0067">ATP-binding</keyword>
<keyword id="KW-0963">Cytoplasm</keyword>
<keyword id="KW-0275">Fatty acid biosynthesis</keyword>
<keyword id="KW-0276">Fatty acid metabolism</keyword>
<keyword id="KW-0444">Lipid biosynthesis</keyword>
<keyword id="KW-0443">Lipid metabolism</keyword>
<keyword id="KW-0547">Nucleotide-binding</keyword>
<keyword id="KW-0808">Transferase</keyword>
<evidence type="ECO:0000255" key="1">
    <source>
        <dbReference type="HAMAP-Rule" id="MF_00823"/>
    </source>
</evidence>
<evidence type="ECO:0000255" key="2">
    <source>
        <dbReference type="PROSITE-ProRule" id="PRU01137"/>
    </source>
</evidence>
<name>ACCA_STAAT</name>
<protein>
    <recommendedName>
        <fullName evidence="1">Acetyl-coenzyme A carboxylase carboxyl transferase subunit alpha</fullName>
        <shortName evidence="1">ACCase subunit alpha</shortName>
        <shortName evidence="1">Acetyl-CoA carboxylase carboxyltransferase subunit alpha</shortName>
        <ecNumber evidence="1">2.1.3.15</ecNumber>
    </recommendedName>
</protein>